<feature type="chain" id="PRO_0000101291" description="5'-3' exonuclease">
    <location>
        <begin position="1"/>
        <end position="301"/>
    </location>
</feature>
<feature type="domain" description="5'-3' exonuclease" evidence="2">
    <location>
        <begin position="182"/>
        <end position="264"/>
    </location>
</feature>
<organism>
    <name type="scientific">Streptomyces coelicolor (strain ATCC BAA-471 / A3(2) / M145)</name>
    <dbReference type="NCBI Taxonomy" id="100226"/>
    <lineage>
        <taxon>Bacteria</taxon>
        <taxon>Bacillati</taxon>
        <taxon>Actinomycetota</taxon>
        <taxon>Actinomycetes</taxon>
        <taxon>Kitasatosporales</taxon>
        <taxon>Streptomycetaceae</taxon>
        <taxon>Streptomyces</taxon>
        <taxon>Streptomyces albidoflavus group</taxon>
    </lineage>
</organism>
<accession>Q9RJ79</accession>
<evidence type="ECO:0000250" key="1"/>
<evidence type="ECO:0000255" key="2"/>
<gene>
    <name type="ordered locus">SCO1622</name>
    <name type="ORF">SCI41.05</name>
</gene>
<reference key="1">
    <citation type="journal article" date="2002" name="Nature">
        <title>Complete genome sequence of the model actinomycete Streptomyces coelicolor A3(2).</title>
        <authorList>
            <person name="Bentley S.D."/>
            <person name="Chater K.F."/>
            <person name="Cerdeno-Tarraga A.-M."/>
            <person name="Challis G.L."/>
            <person name="Thomson N.R."/>
            <person name="James K.D."/>
            <person name="Harris D.E."/>
            <person name="Quail M.A."/>
            <person name="Kieser H."/>
            <person name="Harper D."/>
            <person name="Bateman A."/>
            <person name="Brown S."/>
            <person name="Chandra G."/>
            <person name="Chen C.W."/>
            <person name="Collins M."/>
            <person name="Cronin A."/>
            <person name="Fraser A."/>
            <person name="Goble A."/>
            <person name="Hidalgo J."/>
            <person name="Hornsby T."/>
            <person name="Howarth S."/>
            <person name="Huang C.-H."/>
            <person name="Kieser T."/>
            <person name="Larke L."/>
            <person name="Murphy L.D."/>
            <person name="Oliver K."/>
            <person name="O'Neil S."/>
            <person name="Rabbinowitsch E."/>
            <person name="Rajandream M.A."/>
            <person name="Rutherford K.M."/>
            <person name="Rutter S."/>
            <person name="Seeger K."/>
            <person name="Saunders D."/>
            <person name="Sharp S."/>
            <person name="Squares R."/>
            <person name="Squares S."/>
            <person name="Taylor K."/>
            <person name="Warren T."/>
            <person name="Wietzorrek A."/>
            <person name="Woodward J.R."/>
            <person name="Barrell B.G."/>
            <person name="Parkhill J."/>
            <person name="Hopwood D.A."/>
        </authorList>
    </citation>
    <scope>NUCLEOTIDE SEQUENCE [LARGE SCALE GENOMIC DNA]</scope>
    <source>
        <strain>ATCC BAA-471 / A3(2) / M145</strain>
    </source>
</reference>
<name>EX53_STRCO</name>
<proteinExistence type="inferred from homology"/>
<protein>
    <recommendedName>
        <fullName>5'-3' exonuclease</fullName>
        <ecNumber>3.1.11.-</ecNumber>
    </recommendedName>
</protein>
<keyword id="KW-0238">DNA-binding</keyword>
<keyword id="KW-0269">Exonuclease</keyword>
<keyword id="KW-0378">Hydrolase</keyword>
<keyword id="KW-0540">Nuclease</keyword>
<keyword id="KW-1185">Reference proteome</keyword>
<dbReference type="EC" id="3.1.11.-"/>
<dbReference type="EMBL" id="AL939109">
    <property type="protein sequence ID" value="CAB59475.1"/>
    <property type="molecule type" value="Genomic_DNA"/>
</dbReference>
<dbReference type="RefSeq" id="NP_625897.1">
    <property type="nucleotide sequence ID" value="NC_003888.3"/>
</dbReference>
<dbReference type="RefSeq" id="WP_011027889.1">
    <property type="nucleotide sequence ID" value="NZ_VNID01000018.1"/>
</dbReference>
<dbReference type="SMR" id="Q9RJ79"/>
<dbReference type="FunCoup" id="Q9RJ79">
    <property type="interactions" value="7"/>
</dbReference>
<dbReference type="STRING" id="100226.gene:17759215"/>
<dbReference type="PaxDb" id="100226-SCO1622"/>
<dbReference type="KEGG" id="sco:SCO1622"/>
<dbReference type="PATRIC" id="fig|100226.15.peg.1637"/>
<dbReference type="eggNOG" id="COG0258">
    <property type="taxonomic scope" value="Bacteria"/>
</dbReference>
<dbReference type="HOGENOM" id="CLU_004675_1_3_11"/>
<dbReference type="InParanoid" id="Q9RJ79"/>
<dbReference type="OrthoDB" id="9806424at2"/>
<dbReference type="PhylomeDB" id="Q9RJ79"/>
<dbReference type="Proteomes" id="UP000001973">
    <property type="component" value="Chromosome"/>
</dbReference>
<dbReference type="GO" id="GO:0008409">
    <property type="term" value="F:5'-3' exonuclease activity"/>
    <property type="evidence" value="ECO:0007669"/>
    <property type="project" value="InterPro"/>
</dbReference>
<dbReference type="GO" id="GO:0017108">
    <property type="term" value="F:5'-flap endonuclease activity"/>
    <property type="evidence" value="ECO:0007669"/>
    <property type="project" value="InterPro"/>
</dbReference>
<dbReference type="GO" id="GO:0003677">
    <property type="term" value="F:DNA binding"/>
    <property type="evidence" value="ECO:0007669"/>
    <property type="project" value="UniProtKB-KW"/>
</dbReference>
<dbReference type="GO" id="GO:0033567">
    <property type="term" value="P:DNA replication, Okazaki fragment processing"/>
    <property type="evidence" value="ECO:0007669"/>
    <property type="project" value="InterPro"/>
</dbReference>
<dbReference type="CDD" id="cd09898">
    <property type="entry name" value="H3TH_53EXO"/>
    <property type="match status" value="1"/>
</dbReference>
<dbReference type="CDD" id="cd09859">
    <property type="entry name" value="PIN_53EXO"/>
    <property type="match status" value="1"/>
</dbReference>
<dbReference type="Gene3D" id="1.10.150.20">
    <property type="entry name" value="5' to 3' exonuclease, C-terminal subdomain"/>
    <property type="match status" value="1"/>
</dbReference>
<dbReference type="Gene3D" id="3.40.50.1010">
    <property type="entry name" value="5'-nuclease"/>
    <property type="match status" value="1"/>
</dbReference>
<dbReference type="InterPro" id="IPR020046">
    <property type="entry name" value="5-3_exonucl_a-hlix_arch_N"/>
</dbReference>
<dbReference type="InterPro" id="IPR002421">
    <property type="entry name" value="5-3_exonuclease"/>
</dbReference>
<dbReference type="InterPro" id="IPR036279">
    <property type="entry name" value="5-3_exonuclease_C_sf"/>
</dbReference>
<dbReference type="InterPro" id="IPR020045">
    <property type="entry name" value="DNA_polI_H3TH"/>
</dbReference>
<dbReference type="InterPro" id="IPR038969">
    <property type="entry name" value="FEN"/>
</dbReference>
<dbReference type="InterPro" id="IPR008918">
    <property type="entry name" value="HhH2"/>
</dbReference>
<dbReference type="InterPro" id="IPR029060">
    <property type="entry name" value="PIN-like_dom_sf"/>
</dbReference>
<dbReference type="PANTHER" id="PTHR42646:SF2">
    <property type="entry name" value="5'-3' EXONUCLEASE FAMILY PROTEIN"/>
    <property type="match status" value="1"/>
</dbReference>
<dbReference type="PANTHER" id="PTHR42646">
    <property type="entry name" value="FLAP ENDONUCLEASE XNI"/>
    <property type="match status" value="1"/>
</dbReference>
<dbReference type="Pfam" id="PF01367">
    <property type="entry name" value="5_3_exonuc"/>
    <property type="match status" value="1"/>
</dbReference>
<dbReference type="Pfam" id="PF02739">
    <property type="entry name" value="5_3_exonuc_N"/>
    <property type="match status" value="1"/>
</dbReference>
<dbReference type="SMART" id="SM00475">
    <property type="entry name" value="53EXOc"/>
    <property type="match status" value="1"/>
</dbReference>
<dbReference type="SMART" id="SM00279">
    <property type="entry name" value="HhH2"/>
    <property type="match status" value="1"/>
</dbReference>
<dbReference type="SUPFAM" id="SSF47807">
    <property type="entry name" value="5' to 3' exonuclease, C-terminal subdomain"/>
    <property type="match status" value="1"/>
</dbReference>
<dbReference type="SUPFAM" id="SSF88723">
    <property type="entry name" value="PIN domain-like"/>
    <property type="match status" value="1"/>
</dbReference>
<sequence length="301" mass="31915">MLLDTASLYFRAYFGVPDSVKAPDGTPVNAVRGLLDFIDRLVKDHRPEHLVACMDADWRPHWRVELIPSYKAHRVAEERPAGPDAEEVPDTLSPQVPVIEAVLDALGIARVGVAGYEADDVIGTYTARATGPVDIVTGDRDLYQLVDDARGVRVLYPVKGVGTLNLVDEAALREKYGVDGAGYADLALLRGDPSDGLPGVPGIGEKTAAKLLAEFGDLAGIQAAVDDPKARLTPTQRKRLTEAGPYLAVAPKVVRVAADVPLPDTGTALPHGPRDAAALEALAARWGLGGSLQRLLTTLTA</sequence>
<comment type="function">
    <text evidence="1">5'-3' exonuclease acting preferentially on double-stranded DNA.</text>
</comment>